<keyword id="KW-0963">Cytoplasm</keyword>
<keyword id="KW-0251">Elongation factor</keyword>
<keyword id="KW-0342">GTP-binding</keyword>
<keyword id="KW-0547">Nucleotide-binding</keyword>
<keyword id="KW-0597">Phosphoprotein</keyword>
<keyword id="KW-0648">Protein biosynthesis</keyword>
<name>EF1A_TRYBB</name>
<comment type="function">
    <text evidence="1">This protein promotes the GTP-dependent binding of aminoacyl-tRNA to the A-site of ribosomes during protein biosynthesis.</text>
</comment>
<comment type="subcellular location">
    <subcellularLocation>
        <location evidence="1">Cytoplasm</location>
    </subcellularLocation>
</comment>
<comment type="PTM">
    <text evidence="1">Phosphatidylethanolamine (PE) is a direct precursor of the ethanolamine-phosphoglycerol (EPG) moiety.</text>
</comment>
<comment type="miscellaneous">
    <text evidence="1">The Kennedy pathway is the major route for phosphatidylethanolamine (PE) synthesis, as shown by reduced levels after using RNAi against the first two enzymes of the Kennedy pathway.</text>
</comment>
<comment type="similarity">
    <text evidence="2">Belongs to the TRAFAC class translation factor GTPase superfamily. Classic translation factor GTPase family. EF-Tu/EF-1A subfamily.</text>
</comment>
<evidence type="ECO:0000250" key="1"/>
<evidence type="ECO:0000305" key="2"/>
<proteinExistence type="evidence at transcript level"/>
<protein>
    <recommendedName>
        <fullName>Elongation factor 1-alpha</fullName>
        <shortName>EF-1-alpha</shortName>
    </recommendedName>
</protein>
<accession>P86933</accession>
<accession>P41166</accession>
<accession>Q38C32</accession>
<organism>
    <name type="scientific">Trypanosoma brucei brucei</name>
    <dbReference type="NCBI Taxonomy" id="5702"/>
    <lineage>
        <taxon>Eukaryota</taxon>
        <taxon>Discoba</taxon>
        <taxon>Euglenozoa</taxon>
        <taxon>Kinetoplastea</taxon>
        <taxon>Metakinetoplastina</taxon>
        <taxon>Trypanosomatida</taxon>
        <taxon>Trypanosomatidae</taxon>
        <taxon>Trypanosoma</taxon>
    </lineage>
</organism>
<reference key="1">
    <citation type="journal article" date="1994" name="J. Biol. Chem.">
        <title>Protein translation elongation factor-1 alpha from Trypanosoma brucei binds calmodulin.</title>
        <authorList>
            <person name="Kaur K.J."/>
            <person name="Ruben L."/>
        </authorList>
    </citation>
    <scope>NUCLEOTIDE SEQUENCE [MRNA]</scope>
    <source>
        <strain>LVH/75/USAMRU-K/18</strain>
    </source>
</reference>
<feature type="chain" id="PRO_0000090931" description="Elongation factor 1-alpha">
    <location>
        <begin position="1"/>
        <end position="449"/>
    </location>
</feature>
<feature type="domain" description="tr-type G">
    <location>
        <begin position="5"/>
        <end position="230"/>
    </location>
</feature>
<feature type="region of interest" description="G1" evidence="1">
    <location>
        <begin position="14"/>
        <end position="21"/>
    </location>
</feature>
<feature type="region of interest" description="G2" evidence="1">
    <location>
        <begin position="70"/>
        <end position="74"/>
    </location>
</feature>
<feature type="region of interest" description="G3" evidence="1">
    <location>
        <begin position="91"/>
        <end position="94"/>
    </location>
</feature>
<feature type="region of interest" description="G4" evidence="1">
    <location>
        <begin position="153"/>
        <end position="156"/>
    </location>
</feature>
<feature type="region of interest" description="G5" evidence="1">
    <location>
        <begin position="194"/>
        <end position="196"/>
    </location>
</feature>
<feature type="binding site" evidence="1">
    <location>
        <begin position="14"/>
        <end position="21"/>
    </location>
    <ligand>
        <name>GTP</name>
        <dbReference type="ChEBI" id="CHEBI:37565"/>
    </ligand>
</feature>
<feature type="binding site" evidence="1">
    <location>
        <begin position="91"/>
        <end position="95"/>
    </location>
    <ligand>
        <name>GTP</name>
        <dbReference type="ChEBI" id="CHEBI:37565"/>
    </ligand>
</feature>
<feature type="binding site" evidence="1">
    <location>
        <begin position="153"/>
        <end position="156"/>
    </location>
    <ligand>
        <name>GTP</name>
        <dbReference type="ChEBI" id="CHEBI:37565"/>
    </ligand>
</feature>
<feature type="modified residue" description="5-glutamyl glycerylphosphorylethanolamine" evidence="1">
    <location>
        <position position="362"/>
    </location>
</feature>
<gene>
    <name type="primary">TEF1</name>
</gene>
<sequence length="449" mass="49034">MGKEKVHMNLVVVGHVDAGKSTATGHLIYKCGGIDKRTIEKFEKEAADIGKASFKYAWVLDKLKAERERGITIDIALWKFESPKSVFTIIDAPGHRDFIKNMITGTSQADAAILIIASAQGEFEAGISKDGQTREHALLAFTLGVKQMVVCCNKMDDKTVNYGQERYDEIVKEVSAYIKKVGYNVEKVRFVPISGWQGDNMIEKSEKMPWYKGPTLLEALDMLEPPVRPSDKPLRLPLQTCTKIGGIGTVPVGRVETGVMKPGDVVTFAPANVTTEVKSIEMHHEQLAEATPGDNVGFNVKNVSVKDIRRGNVCGNTKNDPPKEAADFTAQVIILNHPGQIGNGYAPVLDCHTSHIACKFAEIESKIDRRSGKELEKAPKSIKSGDAAIVRMVPQKPMCVEVFNDYAPLGRFAVRDMRQTVAVGIIKAVTKKDGSGGKVTKAAVKASKK</sequence>
<dbReference type="EMBL" id="U10562">
    <property type="protein sequence ID" value="AAA57476.1"/>
    <property type="molecule type" value="mRNA"/>
</dbReference>
<dbReference type="PIR" id="A54760">
    <property type="entry name" value="A54760"/>
</dbReference>
<dbReference type="SMR" id="P86933"/>
<dbReference type="GO" id="GO:0005737">
    <property type="term" value="C:cytoplasm"/>
    <property type="evidence" value="ECO:0000314"/>
    <property type="project" value="GeneDB"/>
</dbReference>
<dbReference type="GO" id="GO:0005516">
    <property type="term" value="F:calmodulin binding"/>
    <property type="evidence" value="ECO:0000314"/>
    <property type="project" value="GeneDB"/>
</dbReference>
<dbReference type="GO" id="GO:0005525">
    <property type="term" value="F:GTP binding"/>
    <property type="evidence" value="ECO:0007669"/>
    <property type="project" value="UniProtKB-KW"/>
</dbReference>
<dbReference type="GO" id="GO:0003924">
    <property type="term" value="F:GTPase activity"/>
    <property type="evidence" value="ECO:0007669"/>
    <property type="project" value="InterPro"/>
</dbReference>
<dbReference type="GO" id="GO:0003729">
    <property type="term" value="F:mRNA binding"/>
    <property type="evidence" value="ECO:0000314"/>
    <property type="project" value="GeneDB"/>
</dbReference>
<dbReference type="GO" id="GO:0003746">
    <property type="term" value="F:translation elongation factor activity"/>
    <property type="evidence" value="ECO:0007669"/>
    <property type="project" value="UniProtKB-KW"/>
</dbReference>
<dbReference type="GO" id="GO:0019722">
    <property type="term" value="P:calcium-mediated signaling"/>
    <property type="evidence" value="ECO:0000304"/>
    <property type="project" value="GeneDB"/>
</dbReference>
<dbReference type="GO" id="GO:0007017">
    <property type="term" value="P:microtubule-based process"/>
    <property type="evidence" value="ECO:0000304"/>
    <property type="project" value="GeneDB"/>
</dbReference>
<dbReference type="CDD" id="cd01883">
    <property type="entry name" value="EF1_alpha"/>
    <property type="match status" value="1"/>
</dbReference>
<dbReference type="CDD" id="cd03693">
    <property type="entry name" value="EF1_alpha_II"/>
    <property type="match status" value="1"/>
</dbReference>
<dbReference type="CDD" id="cd03705">
    <property type="entry name" value="EF1_alpha_III"/>
    <property type="match status" value="1"/>
</dbReference>
<dbReference type="FunFam" id="2.40.30.10:FF:000003">
    <property type="entry name" value="Elongation factor 1-alpha"/>
    <property type="match status" value="1"/>
</dbReference>
<dbReference type="FunFam" id="2.40.30.10:FF:000005">
    <property type="entry name" value="Elongation factor 1-alpha"/>
    <property type="match status" value="1"/>
</dbReference>
<dbReference type="FunFam" id="3.40.50.300:FF:000255">
    <property type="entry name" value="Elongation factor 1-alpha"/>
    <property type="match status" value="1"/>
</dbReference>
<dbReference type="Gene3D" id="3.40.50.300">
    <property type="entry name" value="P-loop containing nucleotide triphosphate hydrolases"/>
    <property type="match status" value="1"/>
</dbReference>
<dbReference type="Gene3D" id="2.40.30.10">
    <property type="entry name" value="Translation factors"/>
    <property type="match status" value="2"/>
</dbReference>
<dbReference type="HAMAP" id="MF_00118_A">
    <property type="entry name" value="EF_Tu_A"/>
    <property type="match status" value="1"/>
</dbReference>
<dbReference type="InterPro" id="IPR004161">
    <property type="entry name" value="EFTu-like_2"/>
</dbReference>
<dbReference type="InterPro" id="IPR031157">
    <property type="entry name" value="G_TR_CS"/>
</dbReference>
<dbReference type="InterPro" id="IPR054696">
    <property type="entry name" value="GTP-eEF1A_C"/>
</dbReference>
<dbReference type="InterPro" id="IPR027417">
    <property type="entry name" value="P-loop_NTPase"/>
</dbReference>
<dbReference type="InterPro" id="IPR000795">
    <property type="entry name" value="T_Tr_GTP-bd_dom"/>
</dbReference>
<dbReference type="InterPro" id="IPR050100">
    <property type="entry name" value="TRAFAC_GTPase_members"/>
</dbReference>
<dbReference type="InterPro" id="IPR009000">
    <property type="entry name" value="Transl_B-barrel_sf"/>
</dbReference>
<dbReference type="InterPro" id="IPR009001">
    <property type="entry name" value="Transl_elong_EF1A/Init_IF2_C"/>
</dbReference>
<dbReference type="InterPro" id="IPR004539">
    <property type="entry name" value="Transl_elong_EF1A_euk/arc"/>
</dbReference>
<dbReference type="NCBIfam" id="TIGR00483">
    <property type="entry name" value="EF-1_alpha"/>
    <property type="match status" value="1"/>
</dbReference>
<dbReference type="NCBIfam" id="NF008969">
    <property type="entry name" value="PRK12317.1"/>
    <property type="match status" value="1"/>
</dbReference>
<dbReference type="PANTHER" id="PTHR23115">
    <property type="entry name" value="TRANSLATION FACTOR"/>
    <property type="match status" value="1"/>
</dbReference>
<dbReference type="Pfam" id="PF22594">
    <property type="entry name" value="GTP-eEF1A_C"/>
    <property type="match status" value="1"/>
</dbReference>
<dbReference type="Pfam" id="PF00009">
    <property type="entry name" value="GTP_EFTU"/>
    <property type="match status" value="1"/>
</dbReference>
<dbReference type="Pfam" id="PF03144">
    <property type="entry name" value="GTP_EFTU_D2"/>
    <property type="match status" value="1"/>
</dbReference>
<dbReference type="PRINTS" id="PR00315">
    <property type="entry name" value="ELONGATNFCT"/>
</dbReference>
<dbReference type="SUPFAM" id="SSF50465">
    <property type="entry name" value="EF-Tu/eEF-1alpha/eIF2-gamma C-terminal domain"/>
    <property type="match status" value="1"/>
</dbReference>
<dbReference type="SUPFAM" id="SSF52540">
    <property type="entry name" value="P-loop containing nucleoside triphosphate hydrolases"/>
    <property type="match status" value="1"/>
</dbReference>
<dbReference type="SUPFAM" id="SSF50447">
    <property type="entry name" value="Translation proteins"/>
    <property type="match status" value="1"/>
</dbReference>
<dbReference type="PROSITE" id="PS00301">
    <property type="entry name" value="G_TR_1"/>
    <property type="match status" value="1"/>
</dbReference>
<dbReference type="PROSITE" id="PS51722">
    <property type="entry name" value="G_TR_2"/>
    <property type="match status" value="1"/>
</dbReference>